<keyword id="KW-0963">Cytoplasm</keyword>
<keyword id="KW-0539">Nucleus</keyword>
<keyword id="KW-1185">Reference proteome</keyword>
<keyword id="KW-0677">Repeat</keyword>
<proteinExistence type="inferred from homology"/>
<organism>
    <name type="scientific">Arabidopsis thaliana</name>
    <name type="common">Mouse-ear cress</name>
    <dbReference type="NCBI Taxonomy" id="3702"/>
    <lineage>
        <taxon>Eukaryota</taxon>
        <taxon>Viridiplantae</taxon>
        <taxon>Streptophyta</taxon>
        <taxon>Embryophyta</taxon>
        <taxon>Tracheophyta</taxon>
        <taxon>Spermatophyta</taxon>
        <taxon>Magnoliopsida</taxon>
        <taxon>eudicotyledons</taxon>
        <taxon>Gunneridae</taxon>
        <taxon>Pentapetalae</taxon>
        <taxon>rosids</taxon>
        <taxon>malvids</taxon>
        <taxon>Brassicales</taxon>
        <taxon>Brassicaceae</taxon>
        <taxon>Camelineae</taxon>
        <taxon>Arabidopsis</taxon>
    </lineage>
</organism>
<accession>Q9FK15</accession>
<evidence type="ECO:0000255" key="1"/>
<evidence type="ECO:0000269" key="2">
    <source>
    </source>
</evidence>
<evidence type="ECO:0000305" key="3"/>
<evidence type="ECO:0000312" key="4">
    <source>
        <dbReference type="Araport" id="AT5G53260"/>
    </source>
</evidence>
<evidence type="ECO:0000312" key="5">
    <source>
        <dbReference type="EMBL" id="BAB09788.1"/>
    </source>
</evidence>
<dbReference type="EMBL" id="AB013388">
    <property type="protein sequence ID" value="BAB09788.1"/>
    <property type="molecule type" value="Genomic_DNA"/>
</dbReference>
<dbReference type="EMBL" id="CP002688">
    <property type="protein sequence ID" value="AED96330.1"/>
    <property type="molecule type" value="Genomic_DNA"/>
</dbReference>
<dbReference type="RefSeq" id="NP_200138.1">
    <property type="nucleotide sequence ID" value="NM_124705.1"/>
</dbReference>
<dbReference type="SMR" id="Q9FK15"/>
<dbReference type="STRING" id="3702.Q9FK15"/>
<dbReference type="GlyGen" id="Q9FK15">
    <property type="glycosylation" value="1 site"/>
</dbReference>
<dbReference type="PaxDb" id="3702-AT5G53260.1"/>
<dbReference type="ProteomicsDB" id="230395"/>
<dbReference type="EnsemblPlants" id="AT5G53260.1">
    <property type="protein sequence ID" value="AT5G53260.1"/>
    <property type="gene ID" value="AT5G53260"/>
</dbReference>
<dbReference type="GeneID" id="835407"/>
<dbReference type="Gramene" id="AT5G53260.1">
    <property type="protein sequence ID" value="AT5G53260.1"/>
    <property type="gene ID" value="AT5G53260"/>
</dbReference>
<dbReference type="KEGG" id="ath:AT5G53260"/>
<dbReference type="Araport" id="AT5G53260"/>
<dbReference type="TAIR" id="AT5G53260"/>
<dbReference type="eggNOG" id="ENOG502R1JD">
    <property type="taxonomic scope" value="Eukaryota"/>
</dbReference>
<dbReference type="HOGENOM" id="CLU_1549773_0_0_1"/>
<dbReference type="InParanoid" id="Q9FK15"/>
<dbReference type="OMA" id="MNVGHKP"/>
<dbReference type="PhylomeDB" id="Q9FK15"/>
<dbReference type="PRO" id="PR:Q9FK15"/>
<dbReference type="Proteomes" id="UP000006548">
    <property type="component" value="Chromosome 5"/>
</dbReference>
<dbReference type="ExpressionAtlas" id="Q9FK15">
    <property type="expression patterns" value="baseline and differential"/>
</dbReference>
<dbReference type="GO" id="GO:0005829">
    <property type="term" value="C:cytosol"/>
    <property type="evidence" value="ECO:0007005"/>
    <property type="project" value="TAIR"/>
</dbReference>
<dbReference type="GO" id="GO:0005634">
    <property type="term" value="C:nucleus"/>
    <property type="evidence" value="ECO:0007669"/>
    <property type="project" value="UniProtKB-SubCell"/>
</dbReference>
<dbReference type="InterPro" id="IPR042971">
    <property type="entry name" value="LEA_SMP"/>
</dbReference>
<dbReference type="InterPro" id="IPR007011">
    <property type="entry name" value="LEA_SMP_dom"/>
</dbReference>
<dbReference type="PANTHER" id="PTHR31174:SF27">
    <property type="entry name" value="LATE EMBRYOGENESIS ABUNDANT PROTEIN 49-RELATED"/>
    <property type="match status" value="1"/>
</dbReference>
<dbReference type="PANTHER" id="PTHR31174">
    <property type="entry name" value="SEED MATURATION FAMILY PROTEIN"/>
    <property type="match status" value="1"/>
</dbReference>
<dbReference type="Pfam" id="PF04927">
    <property type="entry name" value="SMP"/>
    <property type="match status" value="2"/>
</dbReference>
<name>LEA49_ARATH</name>
<reference key="1">
    <citation type="journal article" date="1998" name="DNA Res.">
        <title>Structural analysis of Arabidopsis thaliana chromosome 5. VI. Sequence features of the regions of 1,367,185 bp covered by 19 physically assigned P1 and TAC clones.</title>
        <authorList>
            <person name="Kotani H."/>
            <person name="Nakamura Y."/>
            <person name="Sato S."/>
            <person name="Asamizu E."/>
            <person name="Kaneko T."/>
            <person name="Miyajima N."/>
            <person name="Tabata S."/>
        </authorList>
    </citation>
    <scope>NUCLEOTIDE SEQUENCE [LARGE SCALE GENOMIC DNA]</scope>
    <source>
        <strain>cv. Columbia</strain>
    </source>
</reference>
<reference key="2">
    <citation type="journal article" date="2017" name="Plant J.">
        <title>Araport11: a complete reannotation of the Arabidopsis thaliana reference genome.</title>
        <authorList>
            <person name="Cheng C.Y."/>
            <person name="Krishnakumar V."/>
            <person name="Chan A.P."/>
            <person name="Thibaud-Nissen F."/>
            <person name="Schobel S."/>
            <person name="Town C.D."/>
        </authorList>
    </citation>
    <scope>GENOME REANNOTATION</scope>
    <source>
        <strain>cv. Columbia</strain>
    </source>
</reference>
<reference key="3">
    <citation type="journal article" date="2008" name="BMC Genomics">
        <title>LEA (late embryogenesis abundant) proteins and their encoding genes in Arabidopsis thaliana.</title>
        <authorList>
            <person name="Hundertmark M."/>
            <person name="Hincha D.K."/>
        </authorList>
    </citation>
    <scope>GENE FAMILY</scope>
    <scope>NOMENCLATURE</scope>
</reference>
<reference key="4">
    <citation type="journal article" date="2014" name="Plant Cell">
        <title>The ubiquitous distribution of late embryogenesis abundant proteins across cell compartments in Arabidopsis offers tailored protection against abiotic stress.</title>
        <authorList>
            <person name="Candat A."/>
            <person name="Paszkiewicz G."/>
            <person name="Neveu M."/>
            <person name="Gautier R."/>
            <person name="Logan D.C."/>
            <person name="Avelange-Macherel M.-H."/>
            <person name="Macherel D."/>
        </authorList>
    </citation>
    <scope>SUBCELLULAR LOCATION</scope>
    <scope>GENE FAMILY</scope>
    <scope>NOMENCLATURE</scope>
</reference>
<feature type="chain" id="PRO_0000436062" description="Late embryogenesis abundant protein 49">
    <location>
        <begin position="1"/>
        <end position="176"/>
    </location>
</feature>
<feature type="domain" description="SMP 1" evidence="1">
    <location>
        <begin position="49"/>
        <end position="106"/>
    </location>
</feature>
<feature type="domain" description="SMP 2" evidence="1">
    <location>
        <begin position="115"/>
        <end position="171"/>
    </location>
</feature>
<comment type="function">
    <text evidence="3">LEA proteins are late embryonic proteins abundant in higher plant seed embryos. The function of those proteins is not known.</text>
</comment>
<comment type="subcellular location">
    <subcellularLocation>
        <location evidence="2">Cytoplasm</location>
    </subcellularLocation>
    <subcellularLocation>
        <location evidence="2">Nucleus</location>
    </subcellularLocation>
</comment>
<comment type="similarity">
    <text evidence="3">Belongs to the LEA type SMP family.</text>
</comment>
<protein>
    <recommendedName>
        <fullName evidence="3">Late embryogenesis abundant protein 49</fullName>
        <shortName evidence="3">LEA 49</shortName>
    </recommendedName>
</protein>
<sequence length="176" mass="18272">MGSSKDSASVTNISVEEHFSVSQSSPGGQFVGPTEEISTAAEALIGRSTTLTEALKAASMNVGHKPVETTDVAAIKEVETRAIGGDIESEGGVTAVASKAVARNQKIGKDNEKTNLGDVIAEIDVKVTRDREVTSEDAEAVIRAELNHSPFNNIIPGGVAESVAAAYKLNHDPSSL</sequence>
<gene>
    <name evidence="4" type="ordered locus">At5g53260</name>
    <name evidence="5" type="ORF">K19E1.6</name>
</gene>